<feature type="chain" id="PRO_0000189502" description="2-C-methyl-D-erythritol 2,4-cyclodiphosphate synthase">
    <location>
        <begin position="1"/>
        <end position="159"/>
    </location>
</feature>
<feature type="binding site" evidence="1">
    <location>
        <begin position="10"/>
        <end position="12"/>
    </location>
    <ligand>
        <name>4-CDP-2-C-methyl-D-erythritol 2-phosphate</name>
        <dbReference type="ChEBI" id="CHEBI:57919"/>
    </ligand>
</feature>
<feature type="binding site" evidence="1">
    <location>
        <position position="10"/>
    </location>
    <ligand>
        <name>a divalent metal cation</name>
        <dbReference type="ChEBI" id="CHEBI:60240"/>
    </ligand>
</feature>
<feature type="binding site" evidence="1">
    <location>
        <position position="12"/>
    </location>
    <ligand>
        <name>a divalent metal cation</name>
        <dbReference type="ChEBI" id="CHEBI:60240"/>
    </ligand>
</feature>
<feature type="binding site" evidence="1">
    <location>
        <begin position="36"/>
        <end position="37"/>
    </location>
    <ligand>
        <name>4-CDP-2-C-methyl-D-erythritol 2-phosphate</name>
        <dbReference type="ChEBI" id="CHEBI:57919"/>
    </ligand>
</feature>
<feature type="binding site" evidence="1">
    <location>
        <position position="44"/>
    </location>
    <ligand>
        <name>a divalent metal cation</name>
        <dbReference type="ChEBI" id="CHEBI:60240"/>
    </ligand>
</feature>
<feature type="binding site" evidence="1">
    <location>
        <begin position="58"/>
        <end position="60"/>
    </location>
    <ligand>
        <name>4-CDP-2-C-methyl-D-erythritol 2-phosphate</name>
        <dbReference type="ChEBI" id="CHEBI:57919"/>
    </ligand>
</feature>
<feature type="binding site" evidence="1">
    <location>
        <begin position="63"/>
        <end position="67"/>
    </location>
    <ligand>
        <name>4-CDP-2-C-methyl-D-erythritol 2-phosphate</name>
        <dbReference type="ChEBI" id="CHEBI:57919"/>
    </ligand>
</feature>
<feature type="binding site" evidence="1">
    <location>
        <begin position="102"/>
        <end position="108"/>
    </location>
    <ligand>
        <name>4-CDP-2-C-methyl-D-erythritol 2-phosphate</name>
        <dbReference type="ChEBI" id="CHEBI:57919"/>
    </ligand>
</feature>
<feature type="binding site" evidence="1">
    <location>
        <begin position="134"/>
        <end position="137"/>
    </location>
    <ligand>
        <name>4-CDP-2-C-methyl-D-erythritol 2-phosphate</name>
        <dbReference type="ChEBI" id="CHEBI:57919"/>
    </ligand>
</feature>
<feature type="binding site">
    <location>
        <begin position="141"/>
        <end position="144"/>
    </location>
    <ligand>
        <name>4-CDP-2-C-methyl-D-erythritol 2-phosphate</name>
        <dbReference type="ChEBI" id="CHEBI:57919"/>
    </ligand>
</feature>
<feature type="binding site" evidence="1">
    <location>
        <position position="141"/>
    </location>
    <ligand>
        <name>4-CDP-2-C-methyl-D-erythritol 2-phosphate</name>
        <dbReference type="ChEBI" id="CHEBI:57919"/>
    </ligand>
</feature>
<feature type="binding site" evidence="1">
    <location>
        <position position="144"/>
    </location>
    <ligand>
        <name>4-CDP-2-C-methyl-D-erythritol 2-phosphate</name>
        <dbReference type="ChEBI" id="CHEBI:57919"/>
    </ligand>
</feature>
<feature type="site" description="Transition state stabilizer" evidence="1">
    <location>
        <position position="36"/>
    </location>
</feature>
<feature type="site" description="Transition state stabilizer" evidence="1">
    <location>
        <position position="135"/>
    </location>
</feature>
<feature type="strand" evidence="4">
    <location>
        <begin position="3"/>
        <end position="18"/>
    </location>
</feature>
<feature type="strand" evidence="4">
    <location>
        <begin position="20"/>
        <end position="22"/>
    </location>
</feature>
<feature type="strand" evidence="4">
    <location>
        <begin position="25"/>
        <end position="27"/>
    </location>
</feature>
<feature type="strand" evidence="4">
    <location>
        <begin position="36"/>
        <end position="38"/>
    </location>
</feature>
<feature type="helix" evidence="4">
    <location>
        <begin position="41"/>
        <end position="53"/>
    </location>
</feature>
<feature type="helix" evidence="4">
    <location>
        <begin position="59"/>
        <end position="62"/>
    </location>
</feature>
<feature type="helix" evidence="4">
    <location>
        <begin position="68"/>
        <end position="70"/>
    </location>
</feature>
<feature type="helix" evidence="4">
    <location>
        <begin position="75"/>
        <end position="88"/>
    </location>
</feature>
<feature type="strand" evidence="4">
    <location>
        <begin position="91"/>
        <end position="101"/>
    </location>
</feature>
<feature type="strand" evidence="4">
    <location>
        <begin position="103"/>
        <end position="105"/>
    </location>
</feature>
<feature type="helix" evidence="4">
    <location>
        <begin position="108"/>
        <end position="110"/>
    </location>
</feature>
<feature type="helix" evidence="4">
    <location>
        <begin position="111"/>
        <end position="121"/>
    </location>
</feature>
<feature type="helix" evidence="4">
    <location>
        <begin position="126"/>
        <end position="128"/>
    </location>
</feature>
<feature type="strand" evidence="4">
    <location>
        <begin position="129"/>
        <end position="134"/>
    </location>
</feature>
<feature type="helix" evidence="4">
    <location>
        <begin position="140"/>
        <end position="143"/>
    </location>
</feature>
<feature type="strand" evidence="4">
    <location>
        <begin position="146"/>
        <end position="158"/>
    </location>
</feature>
<evidence type="ECO:0000255" key="1">
    <source>
        <dbReference type="HAMAP-Rule" id="MF_00107"/>
    </source>
</evidence>
<evidence type="ECO:0000269" key="2">
    <source>
    </source>
</evidence>
<evidence type="ECO:0000305" key="3"/>
<evidence type="ECO:0007829" key="4">
    <source>
        <dbReference type="PDB" id="1T0A"/>
    </source>
</evidence>
<comment type="function">
    <text evidence="1">Involved in the biosynthesis of isopentenyl diphosphate (IPP) and dimethylallyl diphosphate (DMAPP), two major building blocks of isoprenoid compounds. Catalyzes the conversion of 4-diphosphocytidyl-2-C-methyl-D-erythritol 2-phosphate (CDP-ME2P) to 2-C-methyl-D-erythritol 2,4-cyclodiphosphate (ME-CPP) with a corresponding release of cytidine 5-monophosphate (CMP).</text>
</comment>
<comment type="catalytic activity">
    <reaction evidence="1">
        <text>4-CDP-2-C-methyl-D-erythritol 2-phosphate = 2-C-methyl-D-erythritol 2,4-cyclic diphosphate + CMP</text>
        <dbReference type="Rhea" id="RHEA:23864"/>
        <dbReference type="ChEBI" id="CHEBI:57919"/>
        <dbReference type="ChEBI" id="CHEBI:58483"/>
        <dbReference type="ChEBI" id="CHEBI:60377"/>
        <dbReference type="EC" id="4.6.1.12"/>
    </reaction>
</comment>
<comment type="cofactor">
    <cofactor evidence="1 2">
        <name>a divalent metal cation</name>
        <dbReference type="ChEBI" id="CHEBI:60240"/>
    </cofactor>
    <text evidence="1 2">Binds 1 divalent metal cation per subunit.</text>
</comment>
<comment type="pathway">
    <text evidence="1">Isoprenoid biosynthesis; isopentenyl diphosphate biosynthesis via DXP pathway; isopentenyl diphosphate from 1-deoxy-D-xylulose 5-phosphate: step 4/6.</text>
</comment>
<comment type="subunit">
    <text evidence="1 2">Homotrimer.</text>
</comment>
<comment type="similarity">
    <text evidence="1 3">Belongs to the IspF family.</text>
</comment>
<dbReference type="EC" id="4.6.1.12" evidence="1"/>
<dbReference type="EMBL" id="AE014299">
    <property type="protein sequence ID" value="AAN56434.1"/>
    <property type="molecule type" value="Genomic_DNA"/>
</dbReference>
<dbReference type="RefSeq" id="NP_718990.1">
    <property type="nucleotide sequence ID" value="NC_004347.2"/>
</dbReference>
<dbReference type="RefSeq" id="WP_011073293.1">
    <property type="nucleotide sequence ID" value="NC_004347.2"/>
</dbReference>
<dbReference type="PDB" id="1T0A">
    <property type="method" value="X-ray"/>
    <property type="resolution" value="1.60 A"/>
    <property type="chains" value="A/B/C=1-159"/>
</dbReference>
<dbReference type="PDBsum" id="1T0A"/>
<dbReference type="SMR" id="Q8EBR3"/>
<dbReference type="STRING" id="211586.SO_3437"/>
<dbReference type="DrugBank" id="DB07780">
    <property type="generic name" value="Farnesyl diphosphate"/>
</dbReference>
<dbReference type="PaxDb" id="211586-SO_3437"/>
<dbReference type="KEGG" id="son:SO_3437"/>
<dbReference type="PATRIC" id="fig|211586.12.peg.3332"/>
<dbReference type="eggNOG" id="COG0245">
    <property type="taxonomic scope" value="Bacteria"/>
</dbReference>
<dbReference type="HOGENOM" id="CLU_084630_2_0_6"/>
<dbReference type="OrthoDB" id="9804336at2"/>
<dbReference type="PhylomeDB" id="Q8EBR3"/>
<dbReference type="BioCyc" id="SONE211586:G1GMP-3208-MONOMER"/>
<dbReference type="UniPathway" id="UPA00056">
    <property type="reaction ID" value="UER00095"/>
</dbReference>
<dbReference type="EvolutionaryTrace" id="Q8EBR3"/>
<dbReference type="Proteomes" id="UP000008186">
    <property type="component" value="Chromosome"/>
</dbReference>
<dbReference type="GO" id="GO:0008685">
    <property type="term" value="F:2-C-methyl-D-erythritol 2,4-cyclodiphosphate synthase activity"/>
    <property type="evidence" value="ECO:0000318"/>
    <property type="project" value="GO_Central"/>
</dbReference>
<dbReference type="GO" id="GO:0046872">
    <property type="term" value="F:metal ion binding"/>
    <property type="evidence" value="ECO:0007669"/>
    <property type="project" value="UniProtKB-KW"/>
</dbReference>
<dbReference type="GO" id="GO:0019288">
    <property type="term" value="P:isopentenyl diphosphate biosynthetic process, methylerythritol 4-phosphate pathway"/>
    <property type="evidence" value="ECO:0007669"/>
    <property type="project" value="UniProtKB-UniRule"/>
</dbReference>
<dbReference type="GO" id="GO:0016114">
    <property type="term" value="P:terpenoid biosynthetic process"/>
    <property type="evidence" value="ECO:0007669"/>
    <property type="project" value="InterPro"/>
</dbReference>
<dbReference type="CDD" id="cd00554">
    <property type="entry name" value="MECDP_synthase"/>
    <property type="match status" value="1"/>
</dbReference>
<dbReference type="FunFam" id="3.30.1330.50:FF:000001">
    <property type="entry name" value="2-C-methyl-D-erythritol 2,4-cyclodiphosphate synthase"/>
    <property type="match status" value="1"/>
</dbReference>
<dbReference type="Gene3D" id="3.30.1330.50">
    <property type="entry name" value="2-C-methyl-D-erythritol 2,4-cyclodiphosphate synthase"/>
    <property type="match status" value="1"/>
</dbReference>
<dbReference type="HAMAP" id="MF_00107">
    <property type="entry name" value="IspF"/>
    <property type="match status" value="1"/>
</dbReference>
<dbReference type="InterPro" id="IPR003526">
    <property type="entry name" value="MECDP_synthase"/>
</dbReference>
<dbReference type="InterPro" id="IPR020555">
    <property type="entry name" value="MECDP_synthase_CS"/>
</dbReference>
<dbReference type="InterPro" id="IPR036571">
    <property type="entry name" value="MECDP_synthase_sf"/>
</dbReference>
<dbReference type="NCBIfam" id="TIGR00151">
    <property type="entry name" value="ispF"/>
    <property type="match status" value="1"/>
</dbReference>
<dbReference type="PANTHER" id="PTHR43181">
    <property type="entry name" value="2-C-METHYL-D-ERYTHRITOL 2,4-CYCLODIPHOSPHATE SYNTHASE, CHLOROPLASTIC"/>
    <property type="match status" value="1"/>
</dbReference>
<dbReference type="PANTHER" id="PTHR43181:SF1">
    <property type="entry name" value="2-C-METHYL-D-ERYTHRITOL 2,4-CYCLODIPHOSPHATE SYNTHASE, CHLOROPLASTIC"/>
    <property type="match status" value="1"/>
</dbReference>
<dbReference type="Pfam" id="PF02542">
    <property type="entry name" value="YgbB"/>
    <property type="match status" value="1"/>
</dbReference>
<dbReference type="SUPFAM" id="SSF69765">
    <property type="entry name" value="IpsF-like"/>
    <property type="match status" value="1"/>
</dbReference>
<dbReference type="PROSITE" id="PS01350">
    <property type="entry name" value="ISPF"/>
    <property type="match status" value="1"/>
</dbReference>
<keyword id="KW-0002">3D-structure</keyword>
<keyword id="KW-0414">Isoprene biosynthesis</keyword>
<keyword id="KW-0456">Lyase</keyword>
<keyword id="KW-0479">Metal-binding</keyword>
<keyword id="KW-1185">Reference proteome</keyword>
<sequence length="159" mass="16996">MKIRIGHGFDVHKFGEPRPLILCGVEVPYETGLVAHSDGDVVLHAISDAILGAMALGDIGKHFPDTDAAYKGADSRVLLRHCYALAKAKGFELGNLDVTIIAQAPKMAPHIEDMRQVLAADLNADVADINVKATTTEKLGFTGRKEGIAVEAVVLLSRQ</sequence>
<gene>
    <name evidence="1" type="primary">ispF</name>
    <name type="ordered locus">SO_3437</name>
</gene>
<proteinExistence type="evidence at protein level"/>
<organism>
    <name type="scientific">Shewanella oneidensis (strain ATCC 700550 / JCM 31522 / CIP 106686 / LMG 19005 / NCIMB 14063 / MR-1)</name>
    <dbReference type="NCBI Taxonomy" id="211586"/>
    <lineage>
        <taxon>Bacteria</taxon>
        <taxon>Pseudomonadati</taxon>
        <taxon>Pseudomonadota</taxon>
        <taxon>Gammaproteobacteria</taxon>
        <taxon>Alteromonadales</taxon>
        <taxon>Shewanellaceae</taxon>
        <taxon>Shewanella</taxon>
    </lineage>
</organism>
<accession>Q8EBR3</accession>
<reference key="1">
    <citation type="journal article" date="2002" name="Nat. Biotechnol.">
        <title>Genome sequence of the dissimilatory metal ion-reducing bacterium Shewanella oneidensis.</title>
        <authorList>
            <person name="Heidelberg J.F."/>
            <person name="Paulsen I.T."/>
            <person name="Nelson K.E."/>
            <person name="Gaidos E.J."/>
            <person name="Nelson W.C."/>
            <person name="Read T.D."/>
            <person name="Eisen J.A."/>
            <person name="Seshadri R."/>
            <person name="Ward N.L."/>
            <person name="Methe B.A."/>
            <person name="Clayton R.A."/>
            <person name="Meyer T."/>
            <person name="Tsapin A."/>
            <person name="Scott J."/>
            <person name="Beanan M.J."/>
            <person name="Brinkac L.M."/>
            <person name="Daugherty S.C."/>
            <person name="DeBoy R.T."/>
            <person name="Dodson R.J."/>
            <person name="Durkin A.S."/>
            <person name="Haft D.H."/>
            <person name="Kolonay J.F."/>
            <person name="Madupu R."/>
            <person name="Peterson J.D."/>
            <person name="Umayam L.A."/>
            <person name="White O."/>
            <person name="Wolf A.M."/>
            <person name="Vamathevan J.J."/>
            <person name="Weidman J.F."/>
            <person name="Impraim M."/>
            <person name="Lee K."/>
            <person name="Berry K.J."/>
            <person name="Lee C."/>
            <person name="Mueller J."/>
            <person name="Khouri H.M."/>
            <person name="Gill J."/>
            <person name="Utterback T.R."/>
            <person name="McDonald L.A."/>
            <person name="Feldblyum T.V."/>
            <person name="Smith H.O."/>
            <person name="Venter J.C."/>
            <person name="Nealson K.H."/>
            <person name="Fraser C.M."/>
        </authorList>
    </citation>
    <scope>NUCLEOTIDE SEQUENCE [LARGE SCALE GENOMIC DNA]</scope>
    <source>
        <strain>ATCC 700550 / JCM 31522 / CIP 106686 / LMG 19005 / NCIMB 14063 / MR-1</strain>
    </source>
</reference>
<reference key="2">
    <citation type="journal article" date="2004" name="Acta Crystallogr. D">
        <title>Structure of 2C-methyl-D-erythritol-2,4-cyclodiphosphate synthase from Shewanella oneidensis at 1.6 A: identification of farnesyl pyrophosphate trapped in a hydrophobic cavity.</title>
        <authorList>
            <person name="Ni S."/>
            <person name="Robinson H."/>
            <person name="Marsing G.C."/>
            <person name="Bussiere D.E."/>
            <person name="Kennedy M.A."/>
        </authorList>
    </citation>
    <scope>X-RAY CRYSTALLOGRAPHY (1.6 ANGSTROMS) IN COMPLEX WITH SUBSTRATE ANALOGS AND DIVALENT CATIONS</scope>
    <scope>COFACTOR</scope>
    <scope>SUBUNIT</scope>
</reference>
<protein>
    <recommendedName>
        <fullName evidence="1">2-C-methyl-D-erythritol 2,4-cyclodiphosphate synthase</fullName>
        <shortName evidence="1">MECDP-synthase</shortName>
        <shortName evidence="1">MECPP-synthase</shortName>
        <shortName evidence="1">MECPS</shortName>
        <ecNumber evidence="1">4.6.1.12</ecNumber>
    </recommendedName>
</protein>
<name>ISPF_SHEON</name>